<comment type="function">
    <text evidence="1">Cooperates with the reticulon proteins and tubule-shaping DP1 family proteins to generate and maintain the structure of the tubular endoplasmic reticulum network. Has GTPase activity, which is required for its function in ER organization.</text>
</comment>
<comment type="subcellular location">
    <subcellularLocation>
        <location evidence="1">Endoplasmic reticulum membrane</location>
        <topology evidence="1">Multi-pass membrane protein</topology>
    </subcellularLocation>
    <text evidence="1">Enriched in the cortical ER. Concentrated in punctae along the ER tubules.</text>
</comment>
<comment type="similarity">
    <text evidence="2">Belongs to the TRAFAC class dynamin-like GTPase superfamily. GB1/RHD3 GTPase family. RHD3 subfamily.</text>
</comment>
<comment type="sequence caution" evidence="4">
    <conflict type="erroneous initiation">
        <sequence resource="EMBL-CDS" id="EDU46330"/>
    </conflict>
</comment>
<feature type="chain" id="PRO_0000384999" description="Protein sey1">
    <location>
        <begin position="1"/>
        <end position="862"/>
    </location>
</feature>
<feature type="topological domain" description="Cytoplasmic" evidence="1">
    <location>
        <begin position="1"/>
        <end position="741"/>
    </location>
</feature>
<feature type="transmembrane region" description="Helical" evidence="1">
    <location>
        <begin position="742"/>
        <end position="762"/>
    </location>
</feature>
<feature type="topological domain" description="Lumenal" evidence="1">
    <location>
        <begin position="763"/>
        <end position="765"/>
    </location>
</feature>
<feature type="transmembrane region" description="Helical" evidence="1">
    <location>
        <begin position="766"/>
        <end position="786"/>
    </location>
</feature>
<feature type="topological domain" description="Cytoplasmic" evidence="1">
    <location>
        <begin position="787"/>
        <end position="862"/>
    </location>
</feature>
<feature type="domain" description="GB1/RHD3-type G" evidence="2">
    <location>
        <begin position="48"/>
        <end position="298"/>
    </location>
</feature>
<feature type="region of interest" description="Disordered" evidence="3">
    <location>
        <begin position="524"/>
        <end position="543"/>
    </location>
</feature>
<feature type="region of interest" description="Disordered" evidence="3">
    <location>
        <begin position="821"/>
        <end position="862"/>
    </location>
</feature>
<feature type="coiled-coil region" evidence="1">
    <location>
        <begin position="473"/>
        <end position="499"/>
    </location>
</feature>
<feature type="compositionally biased region" description="Basic and acidic residues" evidence="3">
    <location>
        <begin position="833"/>
        <end position="856"/>
    </location>
</feature>
<feature type="binding site" evidence="1">
    <location>
        <begin position="58"/>
        <end position="65"/>
    </location>
    <ligand>
        <name>GTP</name>
        <dbReference type="ChEBI" id="CHEBI:37565"/>
    </ligand>
</feature>
<keyword id="KW-0175">Coiled coil</keyword>
<keyword id="KW-0256">Endoplasmic reticulum</keyword>
<keyword id="KW-0342">GTP-binding</keyword>
<keyword id="KW-0378">Hydrolase</keyword>
<keyword id="KW-0472">Membrane</keyword>
<keyword id="KW-0547">Nucleotide-binding</keyword>
<keyword id="KW-1185">Reference proteome</keyword>
<keyword id="KW-0812">Transmembrane</keyword>
<keyword id="KW-1133">Transmembrane helix</keyword>
<gene>
    <name type="primary">sey1</name>
    <name type="ORF">PTRG_03492</name>
</gene>
<organism>
    <name type="scientific">Pyrenophora tritici-repentis (strain Pt-1C-BFP)</name>
    <name type="common">Wheat tan spot fungus</name>
    <name type="synonym">Drechslera tritici-repentis</name>
    <dbReference type="NCBI Taxonomy" id="426418"/>
    <lineage>
        <taxon>Eukaryota</taxon>
        <taxon>Fungi</taxon>
        <taxon>Dikarya</taxon>
        <taxon>Ascomycota</taxon>
        <taxon>Pezizomycotina</taxon>
        <taxon>Dothideomycetes</taxon>
        <taxon>Pleosporomycetidae</taxon>
        <taxon>Pleosporales</taxon>
        <taxon>Pleosporineae</taxon>
        <taxon>Pleosporaceae</taxon>
        <taxon>Pyrenophora</taxon>
    </lineage>
</organism>
<protein>
    <recommendedName>
        <fullName evidence="1">Protein sey1</fullName>
        <ecNumber evidence="1">3.6.5.-</ecNumber>
    </recommendedName>
</protein>
<name>SEY1_PYRTR</name>
<evidence type="ECO:0000255" key="1">
    <source>
        <dbReference type="HAMAP-Rule" id="MF_03109"/>
    </source>
</evidence>
<evidence type="ECO:0000255" key="2">
    <source>
        <dbReference type="PROSITE-ProRule" id="PRU01052"/>
    </source>
</evidence>
<evidence type="ECO:0000256" key="3">
    <source>
        <dbReference type="SAM" id="MobiDB-lite"/>
    </source>
</evidence>
<evidence type="ECO:0000305" key="4"/>
<accession>B2W244</accession>
<reference key="1">
    <citation type="journal article" date="2013" name="G3 (Bethesda)">
        <title>Comparative genomics of a plant-pathogenic fungus, Pyrenophora tritici-repentis, reveals transduplication and the impact of repeat elements on pathogenicity and population divergence.</title>
        <authorList>
            <person name="Manning V.A."/>
            <person name="Pandelova I."/>
            <person name="Dhillon B."/>
            <person name="Wilhelm L.J."/>
            <person name="Goodwin S.B."/>
            <person name="Berlin A.M."/>
            <person name="Figueroa M."/>
            <person name="Freitag M."/>
            <person name="Hane J.K."/>
            <person name="Henrissat B."/>
            <person name="Holman W.H."/>
            <person name="Kodira C.D."/>
            <person name="Martin J."/>
            <person name="Oliver R.P."/>
            <person name="Robbertse B."/>
            <person name="Schackwitz W."/>
            <person name="Schwartz D.C."/>
            <person name="Spatafora J.W."/>
            <person name="Turgeon B.G."/>
            <person name="Yandava C."/>
            <person name="Young S."/>
            <person name="Zhou S."/>
            <person name="Zeng Q."/>
            <person name="Grigoriev I.V."/>
            <person name="Ma L.-J."/>
            <person name="Ciuffetti L.M."/>
        </authorList>
    </citation>
    <scope>NUCLEOTIDE SEQUENCE [LARGE SCALE GENOMIC DNA]</scope>
    <source>
        <strain>Pt-1C-BFP</strain>
    </source>
</reference>
<sequence length="862" mass="96787">MMNAHFAGVGDNADNAAYEHGIQVIDEDKMFNGNVSTYLNIEKVIPAGFNYHLISVFGSQSTGKSTLLNHLFGTQFGVMSEQERRQTTKGIWMSKNKRESGGSSMAENILVMDVEGTDGRERGEDQDFERKSALFALATSEVLIVNIWEHQVGLYQGANMGLLKTVFEVNLQLFVKDSQSTPRSLLFFVIRDHLGTTPLKNLQNTLVQDLSKLWSTISKPAGLENSRIEDYFDFAFVALPHKILQPEKFDEAVTQLSTRFKEGYNDPRKSGLIDEATAPIFLPQYHRRIPADGFSAYAEGVWDQIVNNKDLDLPTQQELLAQFRCDEISREVQVAFDETITPLEDKQAEDARAGTHSLIPDLGPKMNAARQKVLKDFDVNASRYHKGVYKRKQAELEGKVDTRLKALFQKQLTAAHKSGIEGFTEAVSAAVKNGQKKNASYDFAQIVDSEKKKALTKFEEDATAMAIEGAAWSSHENELKIYKKELDDVSGRLRKEEMRRLATRIERWVRTRLDESIGLEFNKLGSGRGGSGAPEHGDRPPTEKDLWDRVWTIFTDTVKMAEKRFTDRASSFDASADEVEVGLWRLRRKSWGVLRAKIDEEVMEGNILLKLRENFEDKFRYDDLGVPRIWRPTDDIDGLYTKARESTITVIPLLAHFKLAKTSKPPPLDAWIGEAPASVSPADEEDLSPIGGVDDDEDKTLEDEMTILSDGKQADLLVRFKKTADGVYVEAKRGAIGGLSQIPFWLYPAMLALGWNEIVAVLRNPIYFIFLILLAVAAYVTYTLNLWGPIMRVANAASQQGLEVGKERLRAFLENSDAGRQAMAMSGSGDSNSTRRYEDVKMDRLNGDGKKSKSMEEDLDDI</sequence>
<proteinExistence type="inferred from homology"/>
<dbReference type="EC" id="3.6.5.-" evidence="1"/>
<dbReference type="EMBL" id="DS231617">
    <property type="protein sequence ID" value="EDU46330.1"/>
    <property type="status" value="ALT_INIT"/>
    <property type="molecule type" value="Genomic_DNA"/>
</dbReference>
<dbReference type="RefSeq" id="XP_001933825.1">
    <property type="nucleotide sequence ID" value="XM_001933790.1"/>
</dbReference>
<dbReference type="SMR" id="B2W244"/>
<dbReference type="FunCoup" id="B2W244">
    <property type="interactions" value="62"/>
</dbReference>
<dbReference type="STRING" id="426418.B2W244"/>
<dbReference type="GeneID" id="6341723"/>
<dbReference type="KEGG" id="ptrr:6341723"/>
<dbReference type="eggNOG" id="KOG2203">
    <property type="taxonomic scope" value="Eukaryota"/>
</dbReference>
<dbReference type="InParanoid" id="B2W244"/>
<dbReference type="OrthoDB" id="23835at28556"/>
<dbReference type="Proteomes" id="UP000001471">
    <property type="component" value="Unassembled WGS sequence"/>
</dbReference>
<dbReference type="GO" id="GO:0005789">
    <property type="term" value="C:endoplasmic reticulum membrane"/>
    <property type="evidence" value="ECO:0007669"/>
    <property type="project" value="UniProtKB-SubCell"/>
</dbReference>
<dbReference type="GO" id="GO:0005525">
    <property type="term" value="F:GTP binding"/>
    <property type="evidence" value="ECO:0007669"/>
    <property type="project" value="UniProtKB-UniRule"/>
</dbReference>
<dbReference type="GO" id="GO:0003924">
    <property type="term" value="F:GTPase activity"/>
    <property type="evidence" value="ECO:0007669"/>
    <property type="project" value="UniProtKB-UniRule"/>
</dbReference>
<dbReference type="GO" id="GO:0016320">
    <property type="term" value="P:endoplasmic reticulum membrane fusion"/>
    <property type="evidence" value="ECO:0007669"/>
    <property type="project" value="TreeGrafter"/>
</dbReference>
<dbReference type="CDD" id="cd01851">
    <property type="entry name" value="GBP"/>
    <property type="match status" value="1"/>
</dbReference>
<dbReference type="FunFam" id="3.40.50.300:FF:000727">
    <property type="entry name" value="Protein SEY1 homolog"/>
    <property type="match status" value="1"/>
</dbReference>
<dbReference type="Gene3D" id="3.40.50.300">
    <property type="entry name" value="P-loop containing nucleotide triphosphate hydrolases"/>
    <property type="match status" value="1"/>
</dbReference>
<dbReference type="HAMAP" id="MF_03109">
    <property type="entry name" value="Sey1"/>
    <property type="match status" value="1"/>
</dbReference>
<dbReference type="InterPro" id="IPR030386">
    <property type="entry name" value="G_GB1_RHD3_dom"/>
</dbReference>
<dbReference type="InterPro" id="IPR027417">
    <property type="entry name" value="P-loop_NTPase"/>
</dbReference>
<dbReference type="InterPro" id="IPR008803">
    <property type="entry name" value="RHD3/Sey1"/>
</dbReference>
<dbReference type="InterPro" id="IPR046758">
    <property type="entry name" value="Sey1/RHD3-like_3HB"/>
</dbReference>
<dbReference type="PANTHER" id="PTHR45923">
    <property type="entry name" value="PROTEIN SEY1"/>
    <property type="match status" value="1"/>
</dbReference>
<dbReference type="PANTHER" id="PTHR45923:SF2">
    <property type="entry name" value="PROTEIN SEY1"/>
    <property type="match status" value="1"/>
</dbReference>
<dbReference type="Pfam" id="PF05879">
    <property type="entry name" value="RHD3_GTPase"/>
    <property type="match status" value="1"/>
</dbReference>
<dbReference type="Pfam" id="PF20428">
    <property type="entry name" value="Sey1_3HB"/>
    <property type="match status" value="1"/>
</dbReference>
<dbReference type="SUPFAM" id="SSF52540">
    <property type="entry name" value="P-loop containing nucleoside triphosphate hydrolases"/>
    <property type="match status" value="1"/>
</dbReference>
<dbReference type="PROSITE" id="PS51715">
    <property type="entry name" value="G_GB1_RHD3"/>
    <property type="match status" value="1"/>
</dbReference>